<accession>Q5XCS3</accession>
<keyword id="KW-0064">Aspartyl protease</keyword>
<keyword id="KW-1003">Cell membrane</keyword>
<keyword id="KW-0378">Hydrolase</keyword>
<keyword id="KW-0472">Membrane</keyword>
<keyword id="KW-0645">Protease</keyword>
<keyword id="KW-0812">Transmembrane</keyword>
<keyword id="KW-1133">Transmembrane helix</keyword>
<proteinExistence type="inferred from homology"/>
<gene>
    <name evidence="1" type="primary">lspA</name>
    <name type="ordered locus">M6_Spy0655</name>
</gene>
<dbReference type="EC" id="3.4.23.36" evidence="1"/>
<dbReference type="EMBL" id="CP000003">
    <property type="protein sequence ID" value="AAT86790.1"/>
    <property type="molecule type" value="Genomic_DNA"/>
</dbReference>
<dbReference type="RefSeq" id="WP_011184387.1">
    <property type="nucleotide sequence ID" value="NC_006086.1"/>
</dbReference>
<dbReference type="SMR" id="Q5XCS3"/>
<dbReference type="KEGG" id="spa:M6_Spy0655"/>
<dbReference type="HOGENOM" id="CLU_083252_3_3_9"/>
<dbReference type="UniPathway" id="UPA00665"/>
<dbReference type="Proteomes" id="UP000001167">
    <property type="component" value="Chromosome"/>
</dbReference>
<dbReference type="GO" id="GO:0005886">
    <property type="term" value="C:plasma membrane"/>
    <property type="evidence" value="ECO:0007669"/>
    <property type="project" value="UniProtKB-SubCell"/>
</dbReference>
<dbReference type="GO" id="GO:0004190">
    <property type="term" value="F:aspartic-type endopeptidase activity"/>
    <property type="evidence" value="ECO:0007669"/>
    <property type="project" value="UniProtKB-UniRule"/>
</dbReference>
<dbReference type="GO" id="GO:0006508">
    <property type="term" value="P:proteolysis"/>
    <property type="evidence" value="ECO:0007669"/>
    <property type="project" value="UniProtKB-KW"/>
</dbReference>
<dbReference type="HAMAP" id="MF_00161">
    <property type="entry name" value="LspA"/>
    <property type="match status" value="1"/>
</dbReference>
<dbReference type="InterPro" id="IPR001872">
    <property type="entry name" value="Peptidase_A8"/>
</dbReference>
<dbReference type="NCBIfam" id="TIGR00077">
    <property type="entry name" value="lspA"/>
    <property type="match status" value="1"/>
</dbReference>
<dbReference type="PANTHER" id="PTHR33695">
    <property type="entry name" value="LIPOPROTEIN SIGNAL PEPTIDASE"/>
    <property type="match status" value="1"/>
</dbReference>
<dbReference type="PANTHER" id="PTHR33695:SF1">
    <property type="entry name" value="LIPOPROTEIN SIGNAL PEPTIDASE"/>
    <property type="match status" value="1"/>
</dbReference>
<dbReference type="Pfam" id="PF01252">
    <property type="entry name" value="Peptidase_A8"/>
    <property type="match status" value="1"/>
</dbReference>
<dbReference type="PRINTS" id="PR00781">
    <property type="entry name" value="LIPOSIGPTASE"/>
</dbReference>
<dbReference type="PROSITE" id="PS00855">
    <property type="entry name" value="SPASE_II"/>
    <property type="match status" value="1"/>
</dbReference>
<name>LSPA_STRP6</name>
<reference key="1">
    <citation type="journal article" date="2004" name="J. Infect. Dis.">
        <title>Progress toward characterization of the group A Streptococcus metagenome: complete genome sequence of a macrolide-resistant serotype M6 strain.</title>
        <authorList>
            <person name="Banks D.J."/>
            <person name="Porcella S.F."/>
            <person name="Barbian K.D."/>
            <person name="Beres S.B."/>
            <person name="Philips L.E."/>
            <person name="Voyich J.M."/>
            <person name="DeLeo F.R."/>
            <person name="Martin J.M."/>
            <person name="Somerville G.A."/>
            <person name="Musser J.M."/>
        </authorList>
    </citation>
    <scope>NUCLEOTIDE SEQUENCE [LARGE SCALE GENOMIC DNA]</scope>
    <source>
        <strain>ATCC BAA-946 / MGAS10394</strain>
    </source>
</reference>
<evidence type="ECO:0000255" key="1">
    <source>
        <dbReference type="HAMAP-Rule" id="MF_00161"/>
    </source>
</evidence>
<sequence length="152" mass="17245">MKKRLFVLSLILLVALDQLSKFWIVSHIALGEVKPFIPGIVSLTYLQNNGAAFSILQDQQWFFVAITVLVIGYAIYYLATHPHLNIWKQLALLLIISGGIGNFIDRLRLAYVIDMVHLDFVDFAIFNVADSYLTVGVILLVICLWKEEDYGD</sequence>
<organism>
    <name type="scientific">Streptococcus pyogenes serotype M6 (strain ATCC BAA-946 / MGAS10394)</name>
    <dbReference type="NCBI Taxonomy" id="286636"/>
    <lineage>
        <taxon>Bacteria</taxon>
        <taxon>Bacillati</taxon>
        <taxon>Bacillota</taxon>
        <taxon>Bacilli</taxon>
        <taxon>Lactobacillales</taxon>
        <taxon>Streptococcaceae</taxon>
        <taxon>Streptococcus</taxon>
    </lineage>
</organism>
<comment type="function">
    <text evidence="1">This protein specifically catalyzes the removal of signal peptides from prolipoproteins.</text>
</comment>
<comment type="catalytic activity">
    <reaction evidence="1">
        <text>Release of signal peptides from bacterial membrane prolipoproteins. Hydrolyzes -Xaa-Yaa-Zaa-|-(S,diacylglyceryl)Cys-, in which Xaa is hydrophobic (preferably Leu), and Yaa (Ala or Ser) and Zaa (Gly or Ala) have small, neutral side chains.</text>
        <dbReference type="EC" id="3.4.23.36"/>
    </reaction>
</comment>
<comment type="pathway">
    <text evidence="1">Protein modification; lipoprotein biosynthesis (signal peptide cleavage).</text>
</comment>
<comment type="subcellular location">
    <subcellularLocation>
        <location evidence="1">Cell membrane</location>
        <topology evidence="1">Multi-pass membrane protein</topology>
    </subcellularLocation>
</comment>
<comment type="similarity">
    <text evidence="1">Belongs to the peptidase A8 family.</text>
</comment>
<protein>
    <recommendedName>
        <fullName evidence="1">Lipoprotein signal peptidase</fullName>
        <ecNumber evidence="1">3.4.23.36</ecNumber>
    </recommendedName>
    <alternativeName>
        <fullName evidence="1">Prolipoprotein signal peptidase</fullName>
    </alternativeName>
    <alternativeName>
        <fullName evidence="1">Signal peptidase II</fullName>
        <shortName evidence="1">SPase II</shortName>
    </alternativeName>
</protein>
<feature type="chain" id="PRO_0000178825" description="Lipoprotein signal peptidase">
    <location>
        <begin position="1"/>
        <end position="152"/>
    </location>
</feature>
<feature type="transmembrane region" description="Helical" evidence="1">
    <location>
        <begin position="5"/>
        <end position="25"/>
    </location>
</feature>
<feature type="transmembrane region" description="Helical" evidence="1">
    <location>
        <begin position="61"/>
        <end position="81"/>
    </location>
</feature>
<feature type="transmembrane region" description="Helical" evidence="1">
    <location>
        <begin position="84"/>
        <end position="104"/>
    </location>
</feature>
<feature type="transmembrane region" description="Helical" evidence="1">
    <location>
        <begin position="125"/>
        <end position="145"/>
    </location>
</feature>
<feature type="active site" evidence="1">
    <location>
        <position position="114"/>
    </location>
</feature>
<feature type="active site" evidence="1">
    <location>
        <position position="130"/>
    </location>
</feature>